<protein>
    <recommendedName>
        <fullName evidence="6">NADPH-dependent 3-keto-steroid reductase HSD3B3</fullName>
    </recommendedName>
    <alternativeName>
        <fullName evidence="4">3 beta-hydroxysteroid dehydrogenase type 3</fullName>
    </alternativeName>
    <alternativeName>
        <fullName>3 beta-hydroxysteroid dehydrogenase type III</fullName>
        <shortName>3 beta-HSD III</shortName>
        <ecNumber evidence="3">1.1.1.270</ecNumber>
    </alternativeName>
    <alternativeName>
        <fullName evidence="6">Dihydrotestosterone 3-ketoreductase</fullName>
        <ecNumber evidence="3">1.1.1.210</ecNumber>
    </alternativeName>
</protein>
<keyword id="KW-0256">Endoplasmic reticulum</keyword>
<keyword id="KW-0443">Lipid metabolism</keyword>
<keyword id="KW-0472">Membrane</keyword>
<keyword id="KW-0496">Mitochondrion</keyword>
<keyword id="KW-0521">NADP</keyword>
<keyword id="KW-0560">Oxidoreductase</keyword>
<keyword id="KW-1185">Reference proteome</keyword>
<keyword id="KW-0753">Steroid metabolism</keyword>
<keyword id="KW-0812">Transmembrane</keyword>
<keyword id="KW-1133">Transmembrane helix</keyword>
<proteinExistence type="evidence at protein level"/>
<comment type="function">
    <text evidence="3">Responsible for the reduction of the oxo group on the C-3 of 5alpha-androstane steroids. Catalyzes the conversion of dihydrotestosterone to its inactive form 5alpha-androstanediol, that does not bind androgen receptor/AR. Does not function as an isomerase.</text>
</comment>
<comment type="catalytic activity">
    <reaction evidence="3">
        <text>a 3beta-hydroxysteroid + NADP(+) = a 3-oxosteroid + NADPH + H(+)</text>
        <dbReference type="Rhea" id="RHEA:34787"/>
        <dbReference type="ChEBI" id="CHEBI:15378"/>
        <dbReference type="ChEBI" id="CHEBI:36836"/>
        <dbReference type="ChEBI" id="CHEBI:47788"/>
        <dbReference type="ChEBI" id="CHEBI:57783"/>
        <dbReference type="ChEBI" id="CHEBI:58349"/>
        <dbReference type="EC" id="1.1.1.270"/>
    </reaction>
</comment>
<comment type="catalytic activity">
    <reaction evidence="3">
        <text>5alpha-androstane-3beta,17beta-diol + NADP(+) = 17beta-hydroxy-5alpha-androstan-3-one + NADPH + H(+)</text>
        <dbReference type="Rhea" id="RHEA:16297"/>
        <dbReference type="ChEBI" id="CHEBI:15378"/>
        <dbReference type="ChEBI" id="CHEBI:16330"/>
        <dbReference type="ChEBI" id="CHEBI:18329"/>
        <dbReference type="ChEBI" id="CHEBI:57783"/>
        <dbReference type="ChEBI" id="CHEBI:58349"/>
        <dbReference type="EC" id="1.1.1.210"/>
    </reaction>
</comment>
<comment type="pathway">
    <text evidence="3">Steroid metabolism.</text>
</comment>
<comment type="subcellular location">
    <subcellularLocation>
        <location>Endoplasmic reticulum membrane</location>
        <topology>Single-pass membrane protein</topology>
    </subcellularLocation>
    <subcellularLocation>
        <location>Mitochondrion membrane</location>
        <topology>Single-pass membrane protein</topology>
    </subcellularLocation>
</comment>
<comment type="tissue specificity">
    <text evidence="3">High levels in adrenal gland, kidney and male liver (at protein level). Low levels in female liver (at protein level). Expressed in ovaries (at protein level).</text>
</comment>
<comment type="similarity">
    <text evidence="5">Belongs to the 3-beta-HSD family.</text>
</comment>
<dbReference type="EC" id="1.1.1.270" evidence="3"/>
<dbReference type="EC" id="1.1.1.210" evidence="3"/>
<dbReference type="EMBL" id="AF017636">
    <property type="protein sequence ID" value="AAB70302.1"/>
    <property type="molecule type" value="mRNA"/>
</dbReference>
<dbReference type="RefSeq" id="NP_001268326.1">
    <property type="nucleotide sequence ID" value="NM_001281397.1"/>
</dbReference>
<dbReference type="SMR" id="O35296"/>
<dbReference type="STRING" id="10036.ENSMAUP00000013541"/>
<dbReference type="GeneID" id="101837099"/>
<dbReference type="KEGG" id="maua:101837099"/>
<dbReference type="eggNOG" id="KOG1430">
    <property type="taxonomic scope" value="Eukaryota"/>
</dbReference>
<dbReference type="OrthoDB" id="1925334at2759"/>
<dbReference type="Proteomes" id="UP000189706">
    <property type="component" value="Unplaced"/>
</dbReference>
<dbReference type="GO" id="GO:0005789">
    <property type="term" value="C:endoplasmic reticulum membrane"/>
    <property type="evidence" value="ECO:0007669"/>
    <property type="project" value="UniProtKB-SubCell"/>
</dbReference>
<dbReference type="GO" id="GO:0031966">
    <property type="term" value="C:mitochondrial membrane"/>
    <property type="evidence" value="ECO:0007669"/>
    <property type="project" value="UniProtKB-SubCell"/>
</dbReference>
<dbReference type="GO" id="GO:0000253">
    <property type="term" value="F:3-beta-hydroxysteroid 3-dehydrogenase (NADP+) activity"/>
    <property type="evidence" value="ECO:0007669"/>
    <property type="project" value="UniProtKB-EC"/>
</dbReference>
<dbReference type="GO" id="GO:0047024">
    <property type="term" value="F:5-alpha-androstane-3-beta,17-beta-diol dehydrogenase (NADP+) activity"/>
    <property type="evidence" value="ECO:0007669"/>
    <property type="project" value="UniProtKB-EC"/>
</dbReference>
<dbReference type="GO" id="GO:0006694">
    <property type="term" value="P:steroid biosynthetic process"/>
    <property type="evidence" value="ECO:0007669"/>
    <property type="project" value="InterPro"/>
</dbReference>
<dbReference type="FunFam" id="3.40.50.720:FF:000220">
    <property type="entry name" value="3 beta-hydroxysteroid dehydrogenase/Delta 5--&gt;4-isomerase type 1"/>
    <property type="match status" value="1"/>
</dbReference>
<dbReference type="Gene3D" id="3.40.50.720">
    <property type="entry name" value="NAD(P)-binding Rossmann-like Domain"/>
    <property type="match status" value="1"/>
</dbReference>
<dbReference type="InterPro" id="IPR002225">
    <property type="entry name" value="3Beta_OHSteriod_DH/Estase"/>
</dbReference>
<dbReference type="InterPro" id="IPR050177">
    <property type="entry name" value="Lipid_A_modif_metabolic_enz"/>
</dbReference>
<dbReference type="InterPro" id="IPR036291">
    <property type="entry name" value="NAD(P)-bd_dom_sf"/>
</dbReference>
<dbReference type="PANTHER" id="PTHR43245">
    <property type="entry name" value="BIFUNCTIONAL POLYMYXIN RESISTANCE PROTEIN ARNA"/>
    <property type="match status" value="1"/>
</dbReference>
<dbReference type="PANTHER" id="PTHR43245:SF51">
    <property type="entry name" value="SHORT CHAIN DEHYDROGENASE_REDUCTASE FAMILY 42E, MEMBER 2"/>
    <property type="match status" value="1"/>
</dbReference>
<dbReference type="Pfam" id="PF01073">
    <property type="entry name" value="3Beta_HSD"/>
    <property type="match status" value="1"/>
</dbReference>
<dbReference type="SUPFAM" id="SSF51735">
    <property type="entry name" value="NAD(P)-binding Rossmann-fold domains"/>
    <property type="match status" value="1"/>
</dbReference>
<name>3BHS3_MESAU</name>
<organism>
    <name type="scientific">Mesocricetus auratus</name>
    <name type="common">Golden hamster</name>
    <dbReference type="NCBI Taxonomy" id="10036"/>
    <lineage>
        <taxon>Eukaryota</taxon>
        <taxon>Metazoa</taxon>
        <taxon>Chordata</taxon>
        <taxon>Craniata</taxon>
        <taxon>Vertebrata</taxon>
        <taxon>Euteleostomi</taxon>
        <taxon>Mammalia</taxon>
        <taxon>Eutheria</taxon>
        <taxon>Euarchontoglires</taxon>
        <taxon>Glires</taxon>
        <taxon>Rodentia</taxon>
        <taxon>Myomorpha</taxon>
        <taxon>Muroidea</taxon>
        <taxon>Cricetidae</taxon>
        <taxon>Cricetinae</taxon>
        <taxon>Mesocricetus</taxon>
    </lineage>
</organism>
<accession>O35296</accession>
<feature type="chain" id="PRO_0000087779" description="NADPH-dependent 3-keto-steroid reductase HSD3B3">
    <location>
        <begin position="1"/>
        <end position="373"/>
    </location>
</feature>
<feature type="transmembrane region" description="Helical" evidence="2">
    <location>
        <begin position="288"/>
        <end position="308"/>
    </location>
</feature>
<feature type="active site" description="Proton donor" evidence="1">
    <location>
        <position position="159"/>
    </location>
</feature>
<feature type="binding site" evidence="1">
    <location>
        <begin position="10"/>
        <end position="15"/>
    </location>
    <ligand>
        <name>NADP(+)</name>
        <dbReference type="ChEBI" id="CHEBI:58349"/>
    </ligand>
</feature>
<feature type="binding site" evidence="1">
    <location>
        <position position="155"/>
    </location>
    <ligand>
        <name>NADP(+)</name>
        <dbReference type="ChEBI" id="CHEBI:58349"/>
    </ligand>
</feature>
<feature type="binding site" evidence="1">
    <location>
        <position position="159"/>
    </location>
    <ligand>
        <name>NADP(+)</name>
        <dbReference type="ChEBI" id="CHEBI:58349"/>
    </ligand>
</feature>
<sequence>MPAWSCLVTGAGGFLGQRIIRMLAQEKELQEVRTLFRSFTPKHREELSKLQTKTKVTVLEGDILDAQCLRRACQGISVVIHTAAAIDVFGAIPRQTVIDINLKGTQHLLDACIGARVPVFIYSSSVAVAGPNSYKVIIQNGSEEENHESTWSDPYAYSKKMAEKAVLAANGSTLKDGGTLHTCALRLPFIYGEKSKFISDTMDRALKNNGLINGFSRFSVISSVYVNNAAWAHVLAARGLQDPKKSPNIQGQFYYISDDTPHQSYDDLCYTLSKDWGLRPDSSWKPPVALLYWFGFLLETVSFLLRPVYNYQPPFNRHLVTLLNSVFTFSYKKAQRDLGYEPLVSWEEAREKTSEWIGSLVEQHKGTLNIKAQ</sequence>
<gene>
    <name type="primary">HSD3B3</name>
</gene>
<evidence type="ECO:0000250" key="1">
    <source>
        <dbReference type="UniProtKB" id="Q12068"/>
    </source>
</evidence>
<evidence type="ECO:0000255" key="2"/>
<evidence type="ECO:0000269" key="3">
    <source>
    </source>
</evidence>
<evidence type="ECO:0000303" key="4">
    <source>
    </source>
</evidence>
<evidence type="ECO:0000305" key="5"/>
<evidence type="ECO:0000305" key="6">
    <source>
    </source>
</evidence>
<reference key="1">
    <citation type="journal article" date="1995" name="J. Steroid Biochem. Mol. Biol.">
        <title>Expression and characterization of isoforms of 3 beta-hydroxysteroid dehydrogenase/delta 5--&gt;4-isomerase in the hamster.</title>
        <authorList>
            <person name="Rogerson F.M."/>
            <person name="Lehoux J.-G."/>
            <person name="Mason J.I."/>
        </authorList>
    </citation>
    <scope>NUCLEOTIDE SEQUENCE [MRNA]</scope>
    <scope>FUNCTION</scope>
    <scope>CATALYTIC ACTIVITY</scope>
    <scope>TISSUE SPECIFICITY</scope>
    <scope>PATHWAY</scope>
    <source>
        <tissue>Liver</tissue>
    </source>
</reference>